<comment type="function">
    <text evidence="1">Catalyzes the GTP-dependent ribosomal translocation step during translation elongation. During this step, the ribosome changes from the pre-translocational (PRE) to the post-translocational (POST) state as the newly formed A-site-bound peptidyl-tRNA and P-site-bound deacylated tRNA move to the P and E sites, respectively. Catalyzes the coordinated movement of the two tRNA molecules, the mRNA and conformational changes in the ribosome.</text>
</comment>
<comment type="subcellular location">
    <subcellularLocation>
        <location evidence="1">Cytoplasm</location>
    </subcellularLocation>
</comment>
<comment type="similarity">
    <text evidence="1">Belongs to the TRAFAC class translation factor GTPase superfamily. Classic translation factor GTPase family. EF-G/EF-2 subfamily.</text>
</comment>
<keyword id="KW-0963">Cytoplasm</keyword>
<keyword id="KW-0251">Elongation factor</keyword>
<keyword id="KW-0342">GTP-binding</keyword>
<keyword id="KW-0547">Nucleotide-binding</keyword>
<keyword id="KW-0648">Protein biosynthesis</keyword>
<reference key="1">
    <citation type="submission" date="2006-06" db="EMBL/GenBank/DDBJ databases">
        <title>Complete sequence of chromosome of Mesorhizobium sp. BNC1.</title>
        <authorList>
            <consortium name="US DOE Joint Genome Institute"/>
            <person name="Copeland A."/>
            <person name="Lucas S."/>
            <person name="Lapidus A."/>
            <person name="Barry K."/>
            <person name="Detter J.C."/>
            <person name="Glavina del Rio T."/>
            <person name="Hammon N."/>
            <person name="Israni S."/>
            <person name="Dalin E."/>
            <person name="Tice H."/>
            <person name="Pitluck S."/>
            <person name="Chertkov O."/>
            <person name="Brettin T."/>
            <person name="Bruce D."/>
            <person name="Han C."/>
            <person name="Tapia R."/>
            <person name="Gilna P."/>
            <person name="Schmutz J."/>
            <person name="Larimer F."/>
            <person name="Land M."/>
            <person name="Hauser L."/>
            <person name="Kyrpides N."/>
            <person name="Mikhailova N."/>
            <person name="Richardson P."/>
        </authorList>
    </citation>
    <scope>NUCLEOTIDE SEQUENCE [LARGE SCALE GENOMIC DNA]</scope>
    <source>
        <strain>BNC1</strain>
    </source>
</reference>
<name>EFG_CHESB</name>
<dbReference type="EMBL" id="CP000390">
    <property type="protein sequence ID" value="ABG63076.1"/>
    <property type="molecule type" value="Genomic_DNA"/>
</dbReference>
<dbReference type="SMR" id="Q11HP9"/>
<dbReference type="STRING" id="266779.Meso_1681"/>
<dbReference type="KEGG" id="mes:Meso_1681"/>
<dbReference type="eggNOG" id="COG0480">
    <property type="taxonomic scope" value="Bacteria"/>
</dbReference>
<dbReference type="HOGENOM" id="CLU_002794_4_1_5"/>
<dbReference type="OrthoDB" id="9802948at2"/>
<dbReference type="GO" id="GO:0005737">
    <property type="term" value="C:cytoplasm"/>
    <property type="evidence" value="ECO:0007669"/>
    <property type="project" value="UniProtKB-SubCell"/>
</dbReference>
<dbReference type="GO" id="GO:0005525">
    <property type="term" value="F:GTP binding"/>
    <property type="evidence" value="ECO:0007669"/>
    <property type="project" value="UniProtKB-UniRule"/>
</dbReference>
<dbReference type="GO" id="GO:0003924">
    <property type="term" value="F:GTPase activity"/>
    <property type="evidence" value="ECO:0007669"/>
    <property type="project" value="InterPro"/>
</dbReference>
<dbReference type="GO" id="GO:0097216">
    <property type="term" value="F:guanosine tetraphosphate binding"/>
    <property type="evidence" value="ECO:0007669"/>
    <property type="project" value="UniProtKB-ARBA"/>
</dbReference>
<dbReference type="GO" id="GO:0003746">
    <property type="term" value="F:translation elongation factor activity"/>
    <property type="evidence" value="ECO:0007669"/>
    <property type="project" value="UniProtKB-UniRule"/>
</dbReference>
<dbReference type="GO" id="GO:0032790">
    <property type="term" value="P:ribosome disassembly"/>
    <property type="evidence" value="ECO:0007669"/>
    <property type="project" value="TreeGrafter"/>
</dbReference>
<dbReference type="CDD" id="cd01886">
    <property type="entry name" value="EF-G"/>
    <property type="match status" value="1"/>
</dbReference>
<dbReference type="CDD" id="cd16262">
    <property type="entry name" value="EFG_III"/>
    <property type="match status" value="1"/>
</dbReference>
<dbReference type="CDD" id="cd01434">
    <property type="entry name" value="EFG_mtEFG1_IV"/>
    <property type="match status" value="1"/>
</dbReference>
<dbReference type="CDD" id="cd03713">
    <property type="entry name" value="EFG_mtEFG_C"/>
    <property type="match status" value="1"/>
</dbReference>
<dbReference type="CDD" id="cd04088">
    <property type="entry name" value="EFG_mtEFG_II"/>
    <property type="match status" value="1"/>
</dbReference>
<dbReference type="FunFam" id="2.40.30.10:FF:000006">
    <property type="entry name" value="Elongation factor G"/>
    <property type="match status" value="1"/>
</dbReference>
<dbReference type="FunFam" id="3.30.230.10:FF:000003">
    <property type="entry name" value="Elongation factor G"/>
    <property type="match status" value="1"/>
</dbReference>
<dbReference type="FunFam" id="3.30.70.240:FF:000001">
    <property type="entry name" value="Elongation factor G"/>
    <property type="match status" value="1"/>
</dbReference>
<dbReference type="FunFam" id="3.30.70.870:FF:000001">
    <property type="entry name" value="Elongation factor G"/>
    <property type="match status" value="1"/>
</dbReference>
<dbReference type="FunFam" id="3.40.50.300:FF:000029">
    <property type="entry name" value="Elongation factor G"/>
    <property type="match status" value="1"/>
</dbReference>
<dbReference type="Gene3D" id="3.30.230.10">
    <property type="match status" value="1"/>
</dbReference>
<dbReference type="Gene3D" id="3.30.70.240">
    <property type="match status" value="1"/>
</dbReference>
<dbReference type="Gene3D" id="3.30.70.870">
    <property type="entry name" value="Elongation Factor G (Translational Gtpase), domain 3"/>
    <property type="match status" value="1"/>
</dbReference>
<dbReference type="Gene3D" id="3.40.50.300">
    <property type="entry name" value="P-loop containing nucleotide triphosphate hydrolases"/>
    <property type="match status" value="1"/>
</dbReference>
<dbReference type="Gene3D" id="2.40.30.10">
    <property type="entry name" value="Translation factors"/>
    <property type="match status" value="1"/>
</dbReference>
<dbReference type="HAMAP" id="MF_00054_B">
    <property type="entry name" value="EF_G_EF_2_B"/>
    <property type="match status" value="1"/>
</dbReference>
<dbReference type="InterPro" id="IPR041095">
    <property type="entry name" value="EFG_II"/>
</dbReference>
<dbReference type="InterPro" id="IPR009022">
    <property type="entry name" value="EFG_III"/>
</dbReference>
<dbReference type="InterPro" id="IPR035647">
    <property type="entry name" value="EFG_III/V"/>
</dbReference>
<dbReference type="InterPro" id="IPR047872">
    <property type="entry name" value="EFG_IV"/>
</dbReference>
<dbReference type="InterPro" id="IPR035649">
    <property type="entry name" value="EFG_V"/>
</dbReference>
<dbReference type="InterPro" id="IPR000640">
    <property type="entry name" value="EFG_V-like"/>
</dbReference>
<dbReference type="InterPro" id="IPR004161">
    <property type="entry name" value="EFTu-like_2"/>
</dbReference>
<dbReference type="InterPro" id="IPR031157">
    <property type="entry name" value="G_TR_CS"/>
</dbReference>
<dbReference type="InterPro" id="IPR027417">
    <property type="entry name" value="P-loop_NTPase"/>
</dbReference>
<dbReference type="InterPro" id="IPR020568">
    <property type="entry name" value="Ribosomal_Su5_D2-typ_SF"/>
</dbReference>
<dbReference type="InterPro" id="IPR014721">
    <property type="entry name" value="Ribsml_uS5_D2-typ_fold_subgr"/>
</dbReference>
<dbReference type="InterPro" id="IPR005225">
    <property type="entry name" value="Small_GTP-bd"/>
</dbReference>
<dbReference type="InterPro" id="IPR000795">
    <property type="entry name" value="T_Tr_GTP-bd_dom"/>
</dbReference>
<dbReference type="InterPro" id="IPR009000">
    <property type="entry name" value="Transl_B-barrel_sf"/>
</dbReference>
<dbReference type="InterPro" id="IPR004540">
    <property type="entry name" value="Transl_elong_EFG/EF2"/>
</dbReference>
<dbReference type="InterPro" id="IPR005517">
    <property type="entry name" value="Transl_elong_EFG/EF2_IV"/>
</dbReference>
<dbReference type="NCBIfam" id="TIGR00484">
    <property type="entry name" value="EF-G"/>
    <property type="match status" value="1"/>
</dbReference>
<dbReference type="NCBIfam" id="NF009381">
    <property type="entry name" value="PRK12740.1-5"/>
    <property type="match status" value="1"/>
</dbReference>
<dbReference type="NCBIfam" id="TIGR00231">
    <property type="entry name" value="small_GTP"/>
    <property type="match status" value="1"/>
</dbReference>
<dbReference type="PANTHER" id="PTHR43261:SF1">
    <property type="entry name" value="RIBOSOME-RELEASING FACTOR 2, MITOCHONDRIAL"/>
    <property type="match status" value="1"/>
</dbReference>
<dbReference type="PANTHER" id="PTHR43261">
    <property type="entry name" value="TRANSLATION ELONGATION FACTOR G-RELATED"/>
    <property type="match status" value="1"/>
</dbReference>
<dbReference type="Pfam" id="PF00679">
    <property type="entry name" value="EFG_C"/>
    <property type="match status" value="1"/>
</dbReference>
<dbReference type="Pfam" id="PF14492">
    <property type="entry name" value="EFG_III"/>
    <property type="match status" value="1"/>
</dbReference>
<dbReference type="Pfam" id="PF03764">
    <property type="entry name" value="EFG_IV"/>
    <property type="match status" value="1"/>
</dbReference>
<dbReference type="Pfam" id="PF00009">
    <property type="entry name" value="GTP_EFTU"/>
    <property type="match status" value="1"/>
</dbReference>
<dbReference type="Pfam" id="PF03144">
    <property type="entry name" value="GTP_EFTU_D2"/>
    <property type="match status" value="1"/>
</dbReference>
<dbReference type="PRINTS" id="PR00315">
    <property type="entry name" value="ELONGATNFCT"/>
</dbReference>
<dbReference type="SMART" id="SM00838">
    <property type="entry name" value="EFG_C"/>
    <property type="match status" value="1"/>
</dbReference>
<dbReference type="SMART" id="SM00889">
    <property type="entry name" value="EFG_IV"/>
    <property type="match status" value="1"/>
</dbReference>
<dbReference type="SUPFAM" id="SSF54980">
    <property type="entry name" value="EF-G C-terminal domain-like"/>
    <property type="match status" value="2"/>
</dbReference>
<dbReference type="SUPFAM" id="SSF52540">
    <property type="entry name" value="P-loop containing nucleoside triphosphate hydrolases"/>
    <property type="match status" value="1"/>
</dbReference>
<dbReference type="SUPFAM" id="SSF54211">
    <property type="entry name" value="Ribosomal protein S5 domain 2-like"/>
    <property type="match status" value="1"/>
</dbReference>
<dbReference type="SUPFAM" id="SSF50447">
    <property type="entry name" value="Translation proteins"/>
    <property type="match status" value="1"/>
</dbReference>
<dbReference type="PROSITE" id="PS00301">
    <property type="entry name" value="G_TR_1"/>
    <property type="match status" value="1"/>
</dbReference>
<dbReference type="PROSITE" id="PS51722">
    <property type="entry name" value="G_TR_2"/>
    <property type="match status" value="1"/>
</dbReference>
<evidence type="ECO:0000255" key="1">
    <source>
        <dbReference type="HAMAP-Rule" id="MF_00054"/>
    </source>
</evidence>
<organism>
    <name type="scientific">Chelativorans sp. (strain BNC1)</name>
    <dbReference type="NCBI Taxonomy" id="266779"/>
    <lineage>
        <taxon>Bacteria</taxon>
        <taxon>Pseudomonadati</taxon>
        <taxon>Pseudomonadota</taxon>
        <taxon>Alphaproteobacteria</taxon>
        <taxon>Hyphomicrobiales</taxon>
        <taxon>Phyllobacteriaceae</taxon>
        <taxon>Chelativorans</taxon>
    </lineage>
</organism>
<gene>
    <name evidence="1" type="primary">fusA</name>
    <name type="ordered locus">Meso_1681</name>
</gene>
<feature type="chain" id="PRO_0000263468" description="Elongation factor G">
    <location>
        <begin position="1"/>
        <end position="696"/>
    </location>
</feature>
<feature type="domain" description="tr-type G">
    <location>
        <begin position="8"/>
        <end position="288"/>
    </location>
</feature>
<feature type="binding site" evidence="1">
    <location>
        <begin position="17"/>
        <end position="24"/>
    </location>
    <ligand>
        <name>GTP</name>
        <dbReference type="ChEBI" id="CHEBI:37565"/>
    </ligand>
</feature>
<feature type="binding site" evidence="1">
    <location>
        <begin position="86"/>
        <end position="90"/>
    </location>
    <ligand>
        <name>GTP</name>
        <dbReference type="ChEBI" id="CHEBI:37565"/>
    </ligand>
</feature>
<feature type="binding site" evidence="1">
    <location>
        <begin position="140"/>
        <end position="143"/>
    </location>
    <ligand>
        <name>GTP</name>
        <dbReference type="ChEBI" id="CHEBI:37565"/>
    </ligand>
</feature>
<proteinExistence type="inferred from homology"/>
<protein>
    <recommendedName>
        <fullName evidence="1">Elongation factor G</fullName>
        <shortName evidence="1">EF-G</shortName>
    </recommendedName>
</protein>
<sequence>MAREFKIEDYRNFGIMAHIDAGKTTTTERILYYTGKSHKIGEVHDGAATMDWMEQEQERGITITSAATTTFWKGRDEKLRRFNIIDTPGHVDFTIEVERSLRVLDGAIALLDANAGVEPQTETVWRQADKYHVPRMIFCNKMDKIGADFYRSVEMVKSRLGATAVVMQLPIGAESDFKGVIDLVEMKALIWRDETLGAAWDVVEIPAEFKEKAEEYREKLIEAAVEMDEGAMERYLEGEMPSIEEIRALVRKGTIEVKFFPMFCGSAFKNKGVQPLLDAVVDFLPSPIDIPAIKGVDAKTEEPIERHAEDSEPLSMLAFKIMNDPFVGSLTFCRIYSGVLKKGVSLENTVKGKRERIGRMLQMHANSREDIEEAYAGDIVALAGLKETTTGDTLCDPLKPVILERMEFPEPVIQIAIEPKTKGDQEKMGLALNRLAAEDPSFRVKTDEESGQTIIAGMGELHLDIIVDRMKREFKVEANIGAPQVAYRETITKTAEIDYTHKKQTGGSGQFARVKIVFEPNPDGEDFLFESKIVGGSVPKEYVPGVQKGIESVLSSGPIAGFPMLGVKATLVDGAYHDVDSSVLAFEIAARAAFREGAQKAGAQLLEPIMKVEVVTPEEYVGSVIGDLNSRRGQIQGQEARGVAVVVNAMVPLANMFKYVDNLRSMSQGRAQYTMQFDHYEPVPSAVAQEIQKKFA</sequence>
<accession>Q11HP9</accession>